<feature type="chain" id="PRO_1000000658" description="Thymidylate synthase">
    <location>
        <begin position="1"/>
        <end position="264"/>
    </location>
</feature>
<feature type="active site" description="Nucleophile" evidence="1">
    <location>
        <position position="146"/>
    </location>
</feature>
<feature type="binding site" description="in other chain" evidence="1">
    <location>
        <position position="21"/>
    </location>
    <ligand>
        <name>dUMP</name>
        <dbReference type="ChEBI" id="CHEBI:246422"/>
        <note>ligand shared between dimeric partners</note>
    </ligand>
</feature>
<feature type="binding site" evidence="1">
    <location>
        <position position="51"/>
    </location>
    <ligand>
        <name>(6R)-5,10-methylene-5,6,7,8-tetrahydrofolate</name>
        <dbReference type="ChEBI" id="CHEBI:15636"/>
    </ligand>
</feature>
<feature type="binding site" evidence="1">
    <location>
        <begin position="126"/>
        <end position="127"/>
    </location>
    <ligand>
        <name>dUMP</name>
        <dbReference type="ChEBI" id="CHEBI:246422"/>
        <note>ligand shared between dimeric partners</note>
    </ligand>
</feature>
<feature type="binding site" description="in other chain" evidence="1">
    <location>
        <begin position="166"/>
        <end position="169"/>
    </location>
    <ligand>
        <name>dUMP</name>
        <dbReference type="ChEBI" id="CHEBI:246422"/>
        <note>ligand shared between dimeric partners</note>
    </ligand>
</feature>
<feature type="binding site" evidence="1">
    <location>
        <position position="169"/>
    </location>
    <ligand>
        <name>(6R)-5,10-methylene-5,6,7,8-tetrahydrofolate</name>
        <dbReference type="ChEBI" id="CHEBI:15636"/>
    </ligand>
</feature>
<feature type="binding site" description="in other chain" evidence="1">
    <location>
        <position position="177"/>
    </location>
    <ligand>
        <name>dUMP</name>
        <dbReference type="ChEBI" id="CHEBI:246422"/>
        <note>ligand shared between dimeric partners</note>
    </ligand>
</feature>
<feature type="binding site" description="in other chain" evidence="1">
    <location>
        <begin position="207"/>
        <end position="209"/>
    </location>
    <ligand>
        <name>dUMP</name>
        <dbReference type="ChEBI" id="CHEBI:246422"/>
        <note>ligand shared between dimeric partners</note>
    </ligand>
</feature>
<feature type="binding site" evidence="1">
    <location>
        <position position="263"/>
    </location>
    <ligand>
        <name>(6R)-5,10-methylene-5,6,7,8-tetrahydrofolate</name>
        <dbReference type="ChEBI" id="CHEBI:15636"/>
    </ligand>
</feature>
<gene>
    <name evidence="1" type="primary">thyA</name>
    <name type="ordered locus">RL3256</name>
</gene>
<comment type="function">
    <text evidence="1">Catalyzes the reductive methylation of 2'-deoxyuridine-5'-monophosphate (dUMP) to 2'-deoxythymidine-5'-monophosphate (dTMP) while utilizing 5,10-methylenetetrahydrofolate (mTHF) as the methyl donor and reductant in the reaction, yielding dihydrofolate (DHF) as a by-product. This enzymatic reaction provides an intracellular de novo source of dTMP, an essential precursor for DNA biosynthesis.</text>
</comment>
<comment type="catalytic activity">
    <reaction evidence="1">
        <text>dUMP + (6R)-5,10-methylene-5,6,7,8-tetrahydrofolate = 7,8-dihydrofolate + dTMP</text>
        <dbReference type="Rhea" id="RHEA:12104"/>
        <dbReference type="ChEBI" id="CHEBI:15636"/>
        <dbReference type="ChEBI" id="CHEBI:57451"/>
        <dbReference type="ChEBI" id="CHEBI:63528"/>
        <dbReference type="ChEBI" id="CHEBI:246422"/>
        <dbReference type="EC" id="2.1.1.45"/>
    </reaction>
</comment>
<comment type="pathway">
    <text evidence="1">Pyrimidine metabolism; dTTP biosynthesis.</text>
</comment>
<comment type="subunit">
    <text evidence="1">Homodimer.</text>
</comment>
<comment type="subcellular location">
    <subcellularLocation>
        <location evidence="1">Cytoplasm</location>
    </subcellularLocation>
</comment>
<comment type="similarity">
    <text evidence="1">Belongs to the thymidylate synthase family. Bacterial-type ThyA subfamily.</text>
</comment>
<evidence type="ECO:0000255" key="1">
    <source>
        <dbReference type="HAMAP-Rule" id="MF_00008"/>
    </source>
</evidence>
<protein>
    <recommendedName>
        <fullName evidence="1">Thymidylate synthase</fullName>
        <shortName evidence="1">TS</shortName>
        <shortName evidence="1">TSase</shortName>
        <ecNumber evidence="1">2.1.1.45</ecNumber>
    </recommendedName>
</protein>
<name>TYSY_RHIJ3</name>
<dbReference type="EC" id="2.1.1.45" evidence="1"/>
<dbReference type="EMBL" id="AM236080">
    <property type="protein sequence ID" value="CAK08744.1"/>
    <property type="molecule type" value="Genomic_DNA"/>
</dbReference>
<dbReference type="RefSeq" id="WP_011652755.1">
    <property type="nucleotide sequence ID" value="NC_008380.1"/>
</dbReference>
<dbReference type="SMR" id="Q1ME82"/>
<dbReference type="EnsemblBacteria" id="CAK08744">
    <property type="protein sequence ID" value="CAK08744"/>
    <property type="gene ID" value="RL3256"/>
</dbReference>
<dbReference type="KEGG" id="rle:RL3256"/>
<dbReference type="eggNOG" id="COG0207">
    <property type="taxonomic scope" value="Bacteria"/>
</dbReference>
<dbReference type="HOGENOM" id="CLU_021669_0_0_5"/>
<dbReference type="UniPathway" id="UPA00575"/>
<dbReference type="Proteomes" id="UP000006575">
    <property type="component" value="Chromosome"/>
</dbReference>
<dbReference type="GO" id="GO:0005829">
    <property type="term" value="C:cytosol"/>
    <property type="evidence" value="ECO:0007669"/>
    <property type="project" value="TreeGrafter"/>
</dbReference>
<dbReference type="GO" id="GO:0004799">
    <property type="term" value="F:thymidylate synthase activity"/>
    <property type="evidence" value="ECO:0007669"/>
    <property type="project" value="UniProtKB-UniRule"/>
</dbReference>
<dbReference type="GO" id="GO:0006231">
    <property type="term" value="P:dTMP biosynthetic process"/>
    <property type="evidence" value="ECO:0007669"/>
    <property type="project" value="UniProtKB-UniRule"/>
</dbReference>
<dbReference type="GO" id="GO:0006235">
    <property type="term" value="P:dTTP biosynthetic process"/>
    <property type="evidence" value="ECO:0007669"/>
    <property type="project" value="UniProtKB-UniRule"/>
</dbReference>
<dbReference type="GO" id="GO:0032259">
    <property type="term" value="P:methylation"/>
    <property type="evidence" value="ECO:0007669"/>
    <property type="project" value="UniProtKB-KW"/>
</dbReference>
<dbReference type="CDD" id="cd00351">
    <property type="entry name" value="TS_Pyrimidine_HMase"/>
    <property type="match status" value="1"/>
</dbReference>
<dbReference type="FunFam" id="3.30.572.10:FF:000001">
    <property type="entry name" value="Thymidylate synthase"/>
    <property type="match status" value="1"/>
</dbReference>
<dbReference type="Gene3D" id="3.30.572.10">
    <property type="entry name" value="Thymidylate synthase/dCMP hydroxymethylase domain"/>
    <property type="match status" value="1"/>
</dbReference>
<dbReference type="HAMAP" id="MF_00008">
    <property type="entry name" value="Thymidy_synth_bact"/>
    <property type="match status" value="1"/>
</dbReference>
<dbReference type="InterPro" id="IPR045097">
    <property type="entry name" value="Thymidate_synth/dCMP_Mease"/>
</dbReference>
<dbReference type="InterPro" id="IPR023451">
    <property type="entry name" value="Thymidate_synth/dCMP_Mease_dom"/>
</dbReference>
<dbReference type="InterPro" id="IPR036926">
    <property type="entry name" value="Thymidate_synth/dCMP_Mease_sf"/>
</dbReference>
<dbReference type="InterPro" id="IPR000398">
    <property type="entry name" value="Thymidylate_synthase"/>
</dbReference>
<dbReference type="InterPro" id="IPR020940">
    <property type="entry name" value="Thymidylate_synthase_AS"/>
</dbReference>
<dbReference type="NCBIfam" id="NF002497">
    <property type="entry name" value="PRK01827.1-3"/>
    <property type="match status" value="1"/>
</dbReference>
<dbReference type="NCBIfam" id="NF002499">
    <property type="entry name" value="PRK01827.1-5"/>
    <property type="match status" value="1"/>
</dbReference>
<dbReference type="NCBIfam" id="TIGR03284">
    <property type="entry name" value="thym_sym"/>
    <property type="match status" value="2"/>
</dbReference>
<dbReference type="PANTHER" id="PTHR11548:SF9">
    <property type="entry name" value="THYMIDYLATE SYNTHASE"/>
    <property type="match status" value="1"/>
</dbReference>
<dbReference type="PANTHER" id="PTHR11548">
    <property type="entry name" value="THYMIDYLATE SYNTHASE 1"/>
    <property type="match status" value="1"/>
</dbReference>
<dbReference type="Pfam" id="PF00303">
    <property type="entry name" value="Thymidylat_synt"/>
    <property type="match status" value="1"/>
</dbReference>
<dbReference type="PRINTS" id="PR00108">
    <property type="entry name" value="THYMDSNTHASE"/>
</dbReference>
<dbReference type="SUPFAM" id="SSF55831">
    <property type="entry name" value="Thymidylate synthase/dCMP hydroxymethylase"/>
    <property type="match status" value="1"/>
</dbReference>
<dbReference type="PROSITE" id="PS00091">
    <property type="entry name" value="THYMIDYLATE_SYNTHASE"/>
    <property type="match status" value="1"/>
</dbReference>
<keyword id="KW-0963">Cytoplasm</keyword>
<keyword id="KW-0489">Methyltransferase</keyword>
<keyword id="KW-0545">Nucleotide biosynthesis</keyword>
<keyword id="KW-0808">Transferase</keyword>
<sequence length="264" mass="29950">MKQYLDLLNHVMEKGSDRGDRTGTGTRSVFGYQMRFDLEEGFPVLTTKKLHLRSIIHELLWFLKGETNIRYLKENGVSIWDEWADENGDLGPVYGAQWRSWPAPDGGHIDQIANLVKGIVNNPNSRRHIVSAWNPAEVDEMALPPCHCLFQFYVADGKLSCQLYQRSADIFLGVPFNISSYALLTMMVAQVVGLKPGDFVHTLGDAHLYHNHFDQAKLQLARRPKPLPFMRIKPDVKDIFGFTFDDFELIGYEADASIKAPIAV</sequence>
<organism>
    <name type="scientific">Rhizobium johnstonii (strain DSM 114642 / LMG 32736 / 3841)</name>
    <name type="common">Rhizobium leguminosarum bv. viciae</name>
    <dbReference type="NCBI Taxonomy" id="216596"/>
    <lineage>
        <taxon>Bacteria</taxon>
        <taxon>Pseudomonadati</taxon>
        <taxon>Pseudomonadota</taxon>
        <taxon>Alphaproteobacteria</taxon>
        <taxon>Hyphomicrobiales</taxon>
        <taxon>Rhizobiaceae</taxon>
        <taxon>Rhizobium/Agrobacterium group</taxon>
        <taxon>Rhizobium</taxon>
        <taxon>Rhizobium johnstonii</taxon>
    </lineage>
</organism>
<accession>Q1ME82</accession>
<reference key="1">
    <citation type="journal article" date="2006" name="Genome Biol.">
        <title>The genome of Rhizobium leguminosarum has recognizable core and accessory components.</title>
        <authorList>
            <person name="Young J.P.W."/>
            <person name="Crossman L.C."/>
            <person name="Johnston A.W.B."/>
            <person name="Thomson N.R."/>
            <person name="Ghazoui Z.F."/>
            <person name="Hull K.H."/>
            <person name="Wexler M."/>
            <person name="Curson A.R.J."/>
            <person name="Todd J.D."/>
            <person name="Poole P.S."/>
            <person name="Mauchline T.H."/>
            <person name="East A.K."/>
            <person name="Quail M.A."/>
            <person name="Churcher C."/>
            <person name="Arrowsmith C."/>
            <person name="Cherevach I."/>
            <person name="Chillingworth T."/>
            <person name="Clarke K."/>
            <person name="Cronin A."/>
            <person name="Davis P."/>
            <person name="Fraser A."/>
            <person name="Hance Z."/>
            <person name="Hauser H."/>
            <person name="Jagels K."/>
            <person name="Moule S."/>
            <person name="Mungall K."/>
            <person name="Norbertczak H."/>
            <person name="Rabbinowitsch E."/>
            <person name="Sanders M."/>
            <person name="Simmonds M."/>
            <person name="Whitehead S."/>
            <person name="Parkhill J."/>
        </authorList>
    </citation>
    <scope>NUCLEOTIDE SEQUENCE [LARGE SCALE GENOMIC DNA]</scope>
    <source>
        <strain>DSM 114642 / LMG 32736 / 3841</strain>
    </source>
</reference>
<proteinExistence type="inferred from homology"/>